<reference key="1">
    <citation type="journal article" date="2010" name="Genome Biol. Evol.">
        <title>Continuing evolution of Burkholderia mallei through genome reduction and large-scale rearrangements.</title>
        <authorList>
            <person name="Losada L."/>
            <person name="Ronning C.M."/>
            <person name="DeShazer D."/>
            <person name="Woods D."/>
            <person name="Fedorova N."/>
            <person name="Kim H.S."/>
            <person name="Shabalina S.A."/>
            <person name="Pearson T.R."/>
            <person name="Brinkac L."/>
            <person name="Tan P."/>
            <person name="Nandi T."/>
            <person name="Crabtree J."/>
            <person name="Badger J."/>
            <person name="Beckstrom-Sternberg S."/>
            <person name="Saqib M."/>
            <person name="Schutzer S.E."/>
            <person name="Keim P."/>
            <person name="Nierman W.C."/>
        </authorList>
    </citation>
    <scope>NUCLEOTIDE SEQUENCE [LARGE SCALE GENOMIC DNA]</scope>
    <source>
        <strain>SAVP1</strain>
    </source>
</reference>
<keyword id="KW-0997">Cell inner membrane</keyword>
<keyword id="KW-1003">Cell membrane</keyword>
<keyword id="KW-0472">Membrane</keyword>
<keyword id="KW-0769">Symport</keyword>
<keyword id="KW-0812">Transmembrane</keyword>
<keyword id="KW-1133">Transmembrane helix</keyword>
<keyword id="KW-0813">Transport</keyword>
<comment type="function">
    <text evidence="1">Responsible for the transport of dicarboxylates such as succinate, fumarate, and malate from the periplasm across the membrane.</text>
</comment>
<comment type="subcellular location">
    <subcellularLocation>
        <location evidence="1">Cell inner membrane</location>
        <topology evidence="1">Multi-pass membrane protein</topology>
    </subcellularLocation>
</comment>
<comment type="similarity">
    <text evidence="1">Belongs to the dicarboxylate/amino acid:cation symporter (DAACS) (TC 2.A.23) family.</text>
</comment>
<evidence type="ECO:0000255" key="1">
    <source>
        <dbReference type="HAMAP-Rule" id="MF_01300"/>
    </source>
</evidence>
<feature type="chain" id="PRO_1000067437" description="C4-dicarboxylate transport protein">
    <location>
        <begin position="1"/>
        <end position="428"/>
    </location>
</feature>
<feature type="transmembrane region" description="Helical" evidence="1">
    <location>
        <begin position="8"/>
        <end position="28"/>
    </location>
</feature>
<feature type="transmembrane region" description="Helical" evidence="1">
    <location>
        <begin position="44"/>
        <end position="64"/>
    </location>
</feature>
<feature type="transmembrane region" description="Helical" evidence="1">
    <location>
        <begin position="78"/>
        <end position="98"/>
    </location>
</feature>
<feature type="transmembrane region" description="Helical" evidence="1">
    <location>
        <begin position="148"/>
        <end position="168"/>
    </location>
</feature>
<feature type="transmembrane region" description="Helical" evidence="1">
    <location>
        <begin position="184"/>
        <end position="204"/>
    </location>
</feature>
<feature type="transmembrane region" description="Helical" evidence="1">
    <location>
        <begin position="222"/>
        <end position="242"/>
    </location>
</feature>
<feature type="transmembrane region" description="Helical" evidence="1">
    <location>
        <begin position="307"/>
        <end position="327"/>
    </location>
</feature>
<feature type="transmembrane region" description="Helical" evidence="1">
    <location>
        <begin position="355"/>
        <end position="375"/>
    </location>
</feature>
<proteinExistence type="inferred from homology"/>
<organism>
    <name type="scientific">Burkholderia mallei (strain SAVP1)</name>
    <dbReference type="NCBI Taxonomy" id="320388"/>
    <lineage>
        <taxon>Bacteria</taxon>
        <taxon>Pseudomonadati</taxon>
        <taxon>Pseudomonadota</taxon>
        <taxon>Betaproteobacteria</taxon>
        <taxon>Burkholderiales</taxon>
        <taxon>Burkholderiaceae</taxon>
        <taxon>Burkholderia</taxon>
        <taxon>pseudomallei group</taxon>
    </lineage>
</organism>
<name>DCTA_BURMS</name>
<sequence>MKKPFYKVLYVQVIFAIVVGVILGHYYPSLAVDMKPLGDGFIKLIKMVIGPIIFCTVVTGIAGMQDMKKVGRVGGKALLYFEIVSTCALVLGLAATHILRPGVGFNIDPATLNGKEVASYAAKAHGQSSVDFLMHIIPNTMIDAFAQGEILQILLIALLFGSVLAHLGERGRVVTDFIDGITRVLFGIVHIVTKLAPIGAFGAMAFTIGKYGVGSLVPLLKLIGTFYLTSVVFVLVVLGAIARFTGFSIIRFVGYIKEELLIVLGTSSSEAALPQLMEKLEKAGCSRSVVGLVVPTGYLFNLDGTNIYMTMAVLFIAQATNIELTWMQQLTLLAVAMLTSKGASGVTGAGFITLAATLAVVPTIPLSGMVLILGIDRFMSECRALTNIVGNGVATVVVSAWEKELDRAKLRAALSGNGEAAAGEAARV</sequence>
<accession>A1V002</accession>
<protein>
    <recommendedName>
        <fullName evidence="1">C4-dicarboxylate transport protein</fullName>
    </recommendedName>
</protein>
<gene>
    <name evidence="1" type="primary">dctA</name>
    <name type="ordered locus">BMASAVP1_A0204</name>
</gene>
<dbReference type="EMBL" id="CP000526">
    <property type="protein sequence ID" value="ABM51730.1"/>
    <property type="molecule type" value="Genomic_DNA"/>
</dbReference>
<dbReference type="RefSeq" id="WP_004198288.1">
    <property type="nucleotide sequence ID" value="NC_008785.1"/>
</dbReference>
<dbReference type="SMR" id="A1V002"/>
<dbReference type="KEGG" id="bmv:BMASAVP1_A0204"/>
<dbReference type="HOGENOM" id="CLU_019375_7_0_4"/>
<dbReference type="GO" id="GO:0005886">
    <property type="term" value="C:plasma membrane"/>
    <property type="evidence" value="ECO:0007669"/>
    <property type="project" value="UniProtKB-SubCell"/>
</dbReference>
<dbReference type="GO" id="GO:0015138">
    <property type="term" value="F:fumarate transmembrane transporter activity"/>
    <property type="evidence" value="ECO:0007669"/>
    <property type="project" value="TreeGrafter"/>
</dbReference>
<dbReference type="GO" id="GO:0015366">
    <property type="term" value="F:malate:proton symporter activity"/>
    <property type="evidence" value="ECO:0007669"/>
    <property type="project" value="TreeGrafter"/>
</dbReference>
<dbReference type="GO" id="GO:0015141">
    <property type="term" value="F:succinate transmembrane transporter activity"/>
    <property type="evidence" value="ECO:0007669"/>
    <property type="project" value="TreeGrafter"/>
</dbReference>
<dbReference type="GO" id="GO:0070778">
    <property type="term" value="P:L-aspartate transmembrane transport"/>
    <property type="evidence" value="ECO:0007669"/>
    <property type="project" value="TreeGrafter"/>
</dbReference>
<dbReference type="FunFam" id="1.10.3860.10:FF:000001">
    <property type="entry name" value="C4-dicarboxylate transport protein"/>
    <property type="match status" value="1"/>
</dbReference>
<dbReference type="Gene3D" id="1.10.3860.10">
    <property type="entry name" value="Sodium:dicarboxylate symporter"/>
    <property type="match status" value="1"/>
</dbReference>
<dbReference type="HAMAP" id="MF_01300">
    <property type="entry name" value="C4_dicarb_transport"/>
    <property type="match status" value="1"/>
</dbReference>
<dbReference type="InterPro" id="IPR023954">
    <property type="entry name" value="C4_dicarb_transport"/>
</dbReference>
<dbReference type="InterPro" id="IPR001991">
    <property type="entry name" value="Na-dicarboxylate_symporter"/>
</dbReference>
<dbReference type="InterPro" id="IPR018107">
    <property type="entry name" value="Na-dicarboxylate_symporter_CS"/>
</dbReference>
<dbReference type="InterPro" id="IPR036458">
    <property type="entry name" value="Na:dicarbo_symporter_sf"/>
</dbReference>
<dbReference type="NCBIfam" id="NF002461">
    <property type="entry name" value="PRK01663.1"/>
    <property type="match status" value="1"/>
</dbReference>
<dbReference type="NCBIfam" id="NF009587">
    <property type="entry name" value="PRK13027.1"/>
    <property type="match status" value="1"/>
</dbReference>
<dbReference type="PANTHER" id="PTHR42865:SF1">
    <property type="entry name" value="AEROBIC C4-DICARBOXYLATE TRANSPORT PROTEIN"/>
    <property type="match status" value="1"/>
</dbReference>
<dbReference type="PANTHER" id="PTHR42865">
    <property type="entry name" value="PROTON/GLUTAMATE-ASPARTATE SYMPORTER"/>
    <property type="match status" value="1"/>
</dbReference>
<dbReference type="Pfam" id="PF00375">
    <property type="entry name" value="SDF"/>
    <property type="match status" value="1"/>
</dbReference>
<dbReference type="PRINTS" id="PR00173">
    <property type="entry name" value="EDTRNSPORT"/>
</dbReference>
<dbReference type="SUPFAM" id="SSF118215">
    <property type="entry name" value="Proton glutamate symport protein"/>
    <property type="match status" value="1"/>
</dbReference>
<dbReference type="PROSITE" id="PS00713">
    <property type="entry name" value="NA_DICARBOXYL_SYMP_1"/>
    <property type="match status" value="1"/>
</dbReference>